<proteinExistence type="inferred from homology"/>
<accession>Q8PLR8</accession>
<gene>
    <name evidence="1" type="primary">ispD</name>
    <name type="ordered locus">XAC1721</name>
</gene>
<keyword id="KW-0414">Isoprene biosynthesis</keyword>
<keyword id="KW-0548">Nucleotidyltransferase</keyword>
<keyword id="KW-0808">Transferase</keyword>
<reference key="1">
    <citation type="journal article" date="2002" name="Nature">
        <title>Comparison of the genomes of two Xanthomonas pathogens with differing host specificities.</title>
        <authorList>
            <person name="da Silva A.C.R."/>
            <person name="Ferro J.A."/>
            <person name="Reinach F.C."/>
            <person name="Farah C.S."/>
            <person name="Furlan L.R."/>
            <person name="Quaggio R.B."/>
            <person name="Monteiro-Vitorello C.B."/>
            <person name="Van Sluys M.A."/>
            <person name="Almeida N.F. Jr."/>
            <person name="Alves L.M.C."/>
            <person name="do Amaral A.M."/>
            <person name="Bertolini M.C."/>
            <person name="Camargo L.E.A."/>
            <person name="Camarotte G."/>
            <person name="Cannavan F."/>
            <person name="Cardozo J."/>
            <person name="Chambergo F."/>
            <person name="Ciapina L.P."/>
            <person name="Cicarelli R.M.B."/>
            <person name="Coutinho L.L."/>
            <person name="Cursino-Santos J.R."/>
            <person name="El-Dorry H."/>
            <person name="Faria J.B."/>
            <person name="Ferreira A.J.S."/>
            <person name="Ferreira R.C.C."/>
            <person name="Ferro M.I.T."/>
            <person name="Formighieri E.F."/>
            <person name="Franco M.C."/>
            <person name="Greggio C.C."/>
            <person name="Gruber A."/>
            <person name="Katsuyama A.M."/>
            <person name="Kishi L.T."/>
            <person name="Leite R.P."/>
            <person name="Lemos E.G.M."/>
            <person name="Lemos M.V.F."/>
            <person name="Locali E.C."/>
            <person name="Machado M.A."/>
            <person name="Madeira A.M.B.N."/>
            <person name="Martinez-Rossi N.M."/>
            <person name="Martins E.C."/>
            <person name="Meidanis J."/>
            <person name="Menck C.F.M."/>
            <person name="Miyaki C.Y."/>
            <person name="Moon D.H."/>
            <person name="Moreira L.M."/>
            <person name="Novo M.T.M."/>
            <person name="Okura V.K."/>
            <person name="Oliveira M.C."/>
            <person name="Oliveira V.R."/>
            <person name="Pereira H.A."/>
            <person name="Rossi A."/>
            <person name="Sena J.A.D."/>
            <person name="Silva C."/>
            <person name="de Souza R.F."/>
            <person name="Spinola L.A.F."/>
            <person name="Takita M.A."/>
            <person name="Tamura R.E."/>
            <person name="Teixeira E.C."/>
            <person name="Tezza R.I.D."/>
            <person name="Trindade dos Santos M."/>
            <person name="Truffi D."/>
            <person name="Tsai S.M."/>
            <person name="White F.F."/>
            <person name="Setubal J.C."/>
            <person name="Kitajima J.P."/>
        </authorList>
    </citation>
    <scope>NUCLEOTIDE SEQUENCE [LARGE SCALE GENOMIC DNA]</scope>
    <source>
        <strain>306</strain>
    </source>
</reference>
<name>ISPD_XANAC</name>
<sequence>MTGSIWAIVPAAGRGTRFGGPLPKQYLQAGGQPLMAYTLAALAAHPALAGIMVAIAPGDADWPGWTAVQSKPVLTCLGGATRAASVLSGLLALPESVRADDFVLVHDAARPNLALADLDRLLEIGRGDPVGAILAAPVRDTLKRAGDDGGIDGTEPRERLWRALTPQLFRRHQLIRGLTEASAAGVEVTDEAMAMERIGLRPLLVEGAEDNFKVTTPADLARFEFELANRDCGPGTRDPESAHPQSSVSASAFSGPGSRAPGPEEI</sequence>
<evidence type="ECO:0000255" key="1">
    <source>
        <dbReference type="HAMAP-Rule" id="MF_00108"/>
    </source>
</evidence>
<evidence type="ECO:0000256" key="2">
    <source>
        <dbReference type="SAM" id="MobiDB-lite"/>
    </source>
</evidence>
<feature type="chain" id="PRO_0000075649" description="2-C-methyl-D-erythritol 4-phosphate cytidylyltransferase">
    <location>
        <begin position="1"/>
        <end position="266"/>
    </location>
</feature>
<feature type="region of interest" description="Disordered" evidence="2">
    <location>
        <begin position="229"/>
        <end position="266"/>
    </location>
</feature>
<feature type="compositionally biased region" description="Polar residues" evidence="2">
    <location>
        <begin position="243"/>
        <end position="252"/>
    </location>
</feature>
<feature type="site" description="Transition state stabilizer" evidence="1">
    <location>
        <position position="17"/>
    </location>
</feature>
<feature type="site" description="Transition state stabilizer" evidence="1">
    <location>
        <position position="24"/>
    </location>
</feature>
<feature type="site" description="Positions MEP for the nucleophilic attack" evidence="1">
    <location>
        <position position="157"/>
    </location>
</feature>
<feature type="site" description="Positions MEP for the nucleophilic attack" evidence="1">
    <location>
        <position position="213"/>
    </location>
</feature>
<comment type="function">
    <text evidence="1">Catalyzes the formation of 4-diphosphocytidyl-2-C-methyl-D-erythritol from CTP and 2-C-methyl-D-erythritol 4-phosphate (MEP).</text>
</comment>
<comment type="catalytic activity">
    <reaction evidence="1">
        <text>2-C-methyl-D-erythritol 4-phosphate + CTP + H(+) = 4-CDP-2-C-methyl-D-erythritol + diphosphate</text>
        <dbReference type="Rhea" id="RHEA:13429"/>
        <dbReference type="ChEBI" id="CHEBI:15378"/>
        <dbReference type="ChEBI" id="CHEBI:33019"/>
        <dbReference type="ChEBI" id="CHEBI:37563"/>
        <dbReference type="ChEBI" id="CHEBI:57823"/>
        <dbReference type="ChEBI" id="CHEBI:58262"/>
        <dbReference type="EC" id="2.7.7.60"/>
    </reaction>
</comment>
<comment type="pathway">
    <text evidence="1">Isoprenoid biosynthesis; isopentenyl diphosphate biosynthesis via DXP pathway; isopentenyl diphosphate from 1-deoxy-D-xylulose 5-phosphate: step 2/6.</text>
</comment>
<comment type="similarity">
    <text evidence="1">Belongs to the IspD/TarI cytidylyltransferase family. IspD subfamily.</text>
</comment>
<protein>
    <recommendedName>
        <fullName evidence="1">2-C-methyl-D-erythritol 4-phosphate cytidylyltransferase</fullName>
        <ecNumber evidence="1">2.7.7.60</ecNumber>
    </recommendedName>
    <alternativeName>
        <fullName evidence="1">4-diphosphocytidyl-2C-methyl-D-erythritol synthase</fullName>
    </alternativeName>
    <alternativeName>
        <fullName evidence="1">MEP cytidylyltransferase</fullName>
        <shortName evidence="1">MCT</shortName>
    </alternativeName>
</protein>
<organism>
    <name type="scientific">Xanthomonas axonopodis pv. citri (strain 306)</name>
    <dbReference type="NCBI Taxonomy" id="190486"/>
    <lineage>
        <taxon>Bacteria</taxon>
        <taxon>Pseudomonadati</taxon>
        <taxon>Pseudomonadota</taxon>
        <taxon>Gammaproteobacteria</taxon>
        <taxon>Lysobacterales</taxon>
        <taxon>Lysobacteraceae</taxon>
        <taxon>Xanthomonas</taxon>
    </lineage>
</organism>
<dbReference type="EC" id="2.7.7.60" evidence="1"/>
<dbReference type="EMBL" id="AE008923">
    <property type="protein sequence ID" value="AAM36588.1"/>
    <property type="molecule type" value="Genomic_DNA"/>
</dbReference>
<dbReference type="RefSeq" id="WP_011051107.1">
    <property type="nucleotide sequence ID" value="NC_003919.1"/>
</dbReference>
<dbReference type="SMR" id="Q8PLR8"/>
<dbReference type="GeneID" id="66910871"/>
<dbReference type="KEGG" id="xac:XAC1721"/>
<dbReference type="eggNOG" id="COG1211">
    <property type="taxonomic scope" value="Bacteria"/>
</dbReference>
<dbReference type="HOGENOM" id="CLU_061281_3_1_6"/>
<dbReference type="UniPathway" id="UPA00056">
    <property type="reaction ID" value="UER00093"/>
</dbReference>
<dbReference type="Proteomes" id="UP000000576">
    <property type="component" value="Chromosome"/>
</dbReference>
<dbReference type="GO" id="GO:0050518">
    <property type="term" value="F:2-C-methyl-D-erythritol 4-phosphate cytidylyltransferase activity"/>
    <property type="evidence" value="ECO:0007669"/>
    <property type="project" value="UniProtKB-UniRule"/>
</dbReference>
<dbReference type="GO" id="GO:0019288">
    <property type="term" value="P:isopentenyl diphosphate biosynthetic process, methylerythritol 4-phosphate pathway"/>
    <property type="evidence" value="ECO:0007669"/>
    <property type="project" value="UniProtKB-UniRule"/>
</dbReference>
<dbReference type="CDD" id="cd02516">
    <property type="entry name" value="CDP-ME_synthetase"/>
    <property type="match status" value="1"/>
</dbReference>
<dbReference type="FunFam" id="3.90.550.10:FF:000003">
    <property type="entry name" value="2-C-methyl-D-erythritol 4-phosphate cytidylyltransferase"/>
    <property type="match status" value="1"/>
</dbReference>
<dbReference type="Gene3D" id="3.90.550.10">
    <property type="entry name" value="Spore Coat Polysaccharide Biosynthesis Protein SpsA, Chain A"/>
    <property type="match status" value="1"/>
</dbReference>
<dbReference type="HAMAP" id="MF_00108">
    <property type="entry name" value="IspD"/>
    <property type="match status" value="1"/>
</dbReference>
<dbReference type="InterPro" id="IPR001228">
    <property type="entry name" value="IspD"/>
</dbReference>
<dbReference type="InterPro" id="IPR034683">
    <property type="entry name" value="IspD/TarI"/>
</dbReference>
<dbReference type="InterPro" id="IPR050088">
    <property type="entry name" value="IspD/TarI_cytidylyltransf_bact"/>
</dbReference>
<dbReference type="InterPro" id="IPR018294">
    <property type="entry name" value="ISPD_synthase_CS"/>
</dbReference>
<dbReference type="InterPro" id="IPR029044">
    <property type="entry name" value="Nucleotide-diphossugar_trans"/>
</dbReference>
<dbReference type="NCBIfam" id="TIGR00453">
    <property type="entry name" value="ispD"/>
    <property type="match status" value="1"/>
</dbReference>
<dbReference type="PANTHER" id="PTHR32125">
    <property type="entry name" value="2-C-METHYL-D-ERYTHRITOL 4-PHOSPHATE CYTIDYLYLTRANSFERASE, CHLOROPLASTIC"/>
    <property type="match status" value="1"/>
</dbReference>
<dbReference type="PANTHER" id="PTHR32125:SF4">
    <property type="entry name" value="2-C-METHYL-D-ERYTHRITOL 4-PHOSPHATE CYTIDYLYLTRANSFERASE, CHLOROPLASTIC"/>
    <property type="match status" value="1"/>
</dbReference>
<dbReference type="Pfam" id="PF01128">
    <property type="entry name" value="IspD"/>
    <property type="match status" value="1"/>
</dbReference>
<dbReference type="SUPFAM" id="SSF53448">
    <property type="entry name" value="Nucleotide-diphospho-sugar transferases"/>
    <property type="match status" value="1"/>
</dbReference>
<dbReference type="PROSITE" id="PS01295">
    <property type="entry name" value="ISPD"/>
    <property type="match status" value="1"/>
</dbReference>